<reference evidence="6 8" key="1">
    <citation type="journal article" date="1994" name="Mech. Dev.">
        <title>Spatial and temporal transcription patterns of the forkhead related XFD-2/XFD-2' genes in Xenopus laevis embryos.</title>
        <authorList>
            <person name="Lef J."/>
            <person name="Clement J.H."/>
            <person name="Oschwald R."/>
            <person name="Koester M."/>
            <person name="Knoechel W."/>
        </authorList>
    </citation>
    <scope>NUCLEOTIDE SEQUENCE [MRNA]</scope>
    <scope>TISSUE SPECIFICITY</scope>
    <scope>DEVELOPMENTAL STAGE</scope>
    <source>
        <tissue evidence="4">Gastrula</tissue>
    </source>
</reference>
<reference evidence="7" key="2">
    <citation type="submission" date="2004-08" db="EMBL/GenBank/DDBJ databases">
        <authorList>
            <consortium name="NIH - Xenopus Gene Collection (XGC) project"/>
        </authorList>
    </citation>
    <scope>NUCLEOTIDE SEQUENCE [LARGE SCALE MRNA]</scope>
    <source>
        <tissue evidence="7">Embryo</tissue>
    </source>
</reference>
<reference evidence="6" key="3">
    <citation type="journal article" date="1992" name="Mech. Dev.">
        <title>Activin A induced expression of a fork head related gene in posterior chordamesoderm (notochord) of Xenopus laevis embryos.</title>
        <authorList>
            <person name="Knoechel S."/>
            <person name="Lef J."/>
            <person name="Clement J.H."/>
            <person name="Klocke B."/>
            <person name="Hille S."/>
            <person name="Koester M."/>
            <person name="Knoechel W."/>
        </authorList>
    </citation>
    <scope>NUCLEOTIDE SEQUENCE [MRNA] OF 118-228</scope>
    <source>
        <tissue evidence="6">Gastrula</tissue>
    </source>
</reference>
<reference evidence="6" key="4">
    <citation type="journal article" date="1995" name="J. Mol. Biol.">
        <title>DNA recognition site analysis of Xenopus winged helix proteins.</title>
        <authorList>
            <person name="Kaufmann E."/>
            <person name="Mueller D."/>
            <person name="Knoechel W."/>
        </authorList>
    </citation>
    <scope>DNA-BINDING</scope>
</reference>
<reference evidence="6" key="5">
    <citation type="journal article" date="1996" name="Int. J. Dev. Biol.">
        <title>A fork head related multigene family is transcribed in Xenopus laevis embryos.</title>
        <authorList>
            <person name="Lef J."/>
            <person name="Dege P."/>
            <person name="Scheucher M."/>
            <person name="Forsbach-Birk V."/>
            <person name="Clement J.H."/>
            <person name="Knoechel W."/>
        </authorList>
    </citation>
    <scope>SUBCELLULAR LOCATION</scope>
    <scope>TISSUE SPECIFICITY</scope>
    <scope>DEVELOPMENTAL STAGE</scope>
</reference>
<reference evidence="6" key="6">
    <citation type="journal article" date="2005" name="Development">
        <title>An essential role of Xenopus Foxi1a for ventral specification of the cephalic ectoderm during gastrulation.</title>
        <authorList>
            <person name="Matsuo-Takasaki M."/>
            <person name="Matsumura M."/>
            <person name="Sasai Y."/>
        </authorList>
    </citation>
    <scope>FUNCTION</scope>
    <scope>TISSUE SPECIFICITY</scope>
    <scope>DEVELOPMENTAL STAGE</scope>
    <scope>INDUCTION</scope>
</reference>
<reference evidence="6" key="7">
    <citation type="journal article" date="2005" name="Gene">
        <title>Of fox and frogs: fox (fork head/winged helix) transcription factors in Xenopus development.</title>
        <authorList>
            <person name="Pohl B.S."/>
            <person name="Knoechel W."/>
        </authorList>
    </citation>
    <scope>REVIEW</scope>
</reference>
<gene>
    <name type="primary">foxi1-a</name>
</gene>
<keyword id="KW-0217">Developmental protein</keyword>
<keyword id="KW-0221">Differentiation</keyword>
<keyword id="KW-0238">DNA-binding</keyword>
<keyword id="KW-0524">Neurogenesis</keyword>
<keyword id="KW-0539">Nucleus</keyword>
<keyword id="KW-1185">Reference proteome</keyword>
<keyword id="KW-0804">Transcription</keyword>
<keyword id="KW-0805">Transcription regulation</keyword>
<proteinExistence type="evidence at protein level"/>
<comment type="function">
    <text evidence="3">Transcription factor. Essential for ventral specification of the early cephalic (head) ectoderm during gastrulation, playing a role in the non-neural versus neural cell fate choice. Binds to DNA via the target sequence 5'-[AG]TAAA[CT]A-3', with 5'-ATAAACA-3' being the preferred binding site.</text>
</comment>
<comment type="subcellular location">
    <subcellularLocation>
        <location evidence="1 5">Nucleus</location>
    </subcellularLocation>
</comment>
<comment type="tissue specificity">
    <text evidence="3 4 5">Initially localized to the animal hemisphere (the presumptive ectoderm) of early-mid blastula embryos. Becomes restricted to head placodes, excluding the otic placodes, by the tailbud stages.</text>
</comment>
<comment type="developmental stage">
    <text evidence="3 4 5">Expression begins at the early-mid blastula stage. Levels are highest during the blastula and gastrula stages, after which levels decreases until somite segregation. At later developmental stages, expressed at a slightly lower level than foxi1-B.</text>
</comment>
<comment type="induction">
    <text evidence="3 5">Induced by Bmp-signaling. Suppressed by Wnt-signaling.</text>
</comment>
<comment type="sequence caution" evidence="6">
    <conflict type="erroneous initiation">
        <sequence resource="EMBL-CDS" id="AAH80044"/>
    </conflict>
</comment>
<feature type="chain" id="PRO_0000258001" description="Forkhead box protein I1-A">
    <location>
        <begin position="1"/>
        <end position="370"/>
    </location>
</feature>
<feature type="DNA-binding region" description="Fork-head" evidence="1">
    <location>
        <begin position="127"/>
        <end position="221"/>
    </location>
</feature>
<feature type="region of interest" description="Disordered" evidence="2">
    <location>
        <begin position="1"/>
        <end position="28"/>
    </location>
</feature>
<feature type="region of interest" description="Disordered" evidence="2">
    <location>
        <begin position="212"/>
        <end position="269"/>
    </location>
</feature>
<feature type="region of interest" description="Disordered" evidence="2">
    <location>
        <begin position="342"/>
        <end position="370"/>
    </location>
</feature>
<feature type="compositionally biased region" description="Basic and acidic residues" evidence="2">
    <location>
        <begin position="232"/>
        <end position="245"/>
    </location>
</feature>
<feature type="compositionally biased region" description="Low complexity" evidence="2">
    <location>
        <begin position="349"/>
        <end position="370"/>
    </location>
</feature>
<feature type="sequence conflict" description="In Ref. 2; AAH80044." evidence="6" ref="2">
    <original>S</original>
    <variation>C</variation>
    <location>
        <position position="167"/>
    </location>
</feature>
<accession>Q91904</accession>
<accession>Q68F03</accession>
<evidence type="ECO:0000255" key="1">
    <source>
        <dbReference type="PROSITE-ProRule" id="PRU00089"/>
    </source>
</evidence>
<evidence type="ECO:0000256" key="2">
    <source>
        <dbReference type="SAM" id="MobiDB-lite"/>
    </source>
</evidence>
<evidence type="ECO:0000269" key="3">
    <source>
    </source>
</evidence>
<evidence type="ECO:0000269" key="4">
    <source>
    </source>
</evidence>
<evidence type="ECO:0000269" key="5">
    <source>
    </source>
</evidence>
<evidence type="ECO:0000305" key="6"/>
<evidence type="ECO:0000312" key="7">
    <source>
        <dbReference type="EMBL" id="AAH80044.1"/>
    </source>
</evidence>
<evidence type="ECO:0000312" key="8">
    <source>
        <dbReference type="EMBL" id="CAA52364.1"/>
    </source>
</evidence>
<protein>
    <recommendedName>
        <fullName>Forkhead box protein I1-A</fullName>
        <shortName>FoxI1-A</shortName>
        <shortName>FoxI1a</shortName>
        <shortName>xFoxI1a</shortName>
    </recommendedName>
    <alternativeName>
        <fullName>Fork head domain-related protein 2</fullName>
        <shortName>xFD-2</shortName>
        <shortName>xFD2</shortName>
    </alternativeName>
</protein>
<sequence length="370" mass="41388">MNPVQQPAQHKCPASSLNPPHPKRAQEAPDMGLYCDNFMYQQHNLHPSHRATNFSIGDFTHQANPYLWLGGPGVNNSPSYSPTPAPYIPPAFSAPQRQFLANSAAFGGADLGWMSAASQEELLKRVRPPYSYSALIAMSIQNATDKRLTLSQIYQYVAENFPFYKKSKAGWQNSIRHNLSLNDCFKKMPRDENDPGKGNYWTLDSNCEKMFDNGNFRRKRKPKSETNNIKIAKREEDHVSPKGKESPPMITPSSPKELSPTGHSKCPSPPTVTYTPCLTNFIGSMTAVDSATMNRQGPLGLLNELSQRNLNGLSSFISGSAVDQSPEHQDSSLFYNRSPYYSSLPTSNQKQPPYLQQLHPQQSPLYQGRY</sequence>
<name>FXI1A_XENLA</name>
<dbReference type="EMBL" id="X74315">
    <property type="protein sequence ID" value="CAA52364.1"/>
    <property type="molecule type" value="mRNA"/>
</dbReference>
<dbReference type="EMBL" id="BC080044">
    <property type="protein sequence ID" value="AAH80044.1"/>
    <property type="status" value="ALT_INIT"/>
    <property type="molecule type" value="mRNA"/>
</dbReference>
<dbReference type="PIR" id="S49008">
    <property type="entry name" value="S49008"/>
</dbReference>
<dbReference type="SMR" id="Q91904"/>
<dbReference type="DNASU" id="397954"/>
<dbReference type="KEGG" id="xla:397954"/>
<dbReference type="AGR" id="Xenbase:XB-GENE-865722"/>
<dbReference type="CTD" id="397954"/>
<dbReference type="Xenbase" id="XB-GENE-865722">
    <property type="gene designation" value="foxi3.2.S"/>
</dbReference>
<dbReference type="OrthoDB" id="5402974at2759"/>
<dbReference type="Proteomes" id="UP000186698">
    <property type="component" value="Chromosome 1S"/>
</dbReference>
<dbReference type="Bgee" id="397954">
    <property type="expression patterns" value="Expressed in gastrula and 3 other cell types or tissues"/>
</dbReference>
<dbReference type="GO" id="GO:0005634">
    <property type="term" value="C:nucleus"/>
    <property type="evidence" value="ECO:0000314"/>
    <property type="project" value="UniProtKB"/>
</dbReference>
<dbReference type="GO" id="GO:0000981">
    <property type="term" value="F:DNA-binding transcription factor activity, RNA polymerase II-specific"/>
    <property type="evidence" value="ECO:0000318"/>
    <property type="project" value="GO_Central"/>
</dbReference>
<dbReference type="GO" id="GO:0000978">
    <property type="term" value="F:RNA polymerase II cis-regulatory region sequence-specific DNA binding"/>
    <property type="evidence" value="ECO:0000318"/>
    <property type="project" value="GO_Central"/>
</dbReference>
<dbReference type="GO" id="GO:0043565">
    <property type="term" value="F:sequence-specific DNA binding"/>
    <property type="evidence" value="ECO:0000314"/>
    <property type="project" value="UniProtKB"/>
</dbReference>
<dbReference type="GO" id="GO:0009653">
    <property type="term" value="P:anatomical structure morphogenesis"/>
    <property type="evidence" value="ECO:0000318"/>
    <property type="project" value="GO_Central"/>
</dbReference>
<dbReference type="GO" id="GO:0030154">
    <property type="term" value="P:cell differentiation"/>
    <property type="evidence" value="ECO:0000318"/>
    <property type="project" value="GO_Central"/>
</dbReference>
<dbReference type="GO" id="GO:0048264">
    <property type="term" value="P:determination of ventral identity"/>
    <property type="evidence" value="ECO:0000315"/>
    <property type="project" value="UniProtKB"/>
</dbReference>
<dbReference type="GO" id="GO:0007398">
    <property type="term" value="P:ectoderm development"/>
    <property type="evidence" value="ECO:0000315"/>
    <property type="project" value="UniProtKB"/>
</dbReference>
<dbReference type="GO" id="GO:0007399">
    <property type="term" value="P:nervous system development"/>
    <property type="evidence" value="ECO:0007669"/>
    <property type="project" value="UniProtKB-KW"/>
</dbReference>
<dbReference type="GO" id="GO:0045893">
    <property type="term" value="P:positive regulation of DNA-templated transcription"/>
    <property type="evidence" value="ECO:0000250"/>
    <property type="project" value="UniProtKB"/>
</dbReference>
<dbReference type="GO" id="GO:0006357">
    <property type="term" value="P:regulation of transcription by RNA polymerase II"/>
    <property type="evidence" value="ECO:0000318"/>
    <property type="project" value="GO_Central"/>
</dbReference>
<dbReference type="FunFam" id="1.10.10.10:FF:000016">
    <property type="entry name" value="Forkhead box protein I1"/>
    <property type="match status" value="1"/>
</dbReference>
<dbReference type="Gene3D" id="1.10.10.10">
    <property type="entry name" value="Winged helix-like DNA-binding domain superfamily/Winged helix DNA-binding domain"/>
    <property type="match status" value="1"/>
</dbReference>
<dbReference type="InterPro" id="IPR001766">
    <property type="entry name" value="Fork_head_dom"/>
</dbReference>
<dbReference type="InterPro" id="IPR050211">
    <property type="entry name" value="FOX_domain-containing"/>
</dbReference>
<dbReference type="InterPro" id="IPR030456">
    <property type="entry name" value="TF_fork_head_CS_2"/>
</dbReference>
<dbReference type="InterPro" id="IPR036388">
    <property type="entry name" value="WH-like_DNA-bd_sf"/>
</dbReference>
<dbReference type="InterPro" id="IPR036390">
    <property type="entry name" value="WH_DNA-bd_sf"/>
</dbReference>
<dbReference type="PANTHER" id="PTHR11829">
    <property type="entry name" value="FORKHEAD BOX PROTEIN"/>
    <property type="match status" value="1"/>
</dbReference>
<dbReference type="PANTHER" id="PTHR11829:SF408">
    <property type="entry name" value="FORKHEAD BOX PROTEIN I1"/>
    <property type="match status" value="1"/>
</dbReference>
<dbReference type="Pfam" id="PF00250">
    <property type="entry name" value="Forkhead"/>
    <property type="match status" value="1"/>
</dbReference>
<dbReference type="PRINTS" id="PR00053">
    <property type="entry name" value="FORKHEAD"/>
</dbReference>
<dbReference type="SMART" id="SM00339">
    <property type="entry name" value="FH"/>
    <property type="match status" value="1"/>
</dbReference>
<dbReference type="SUPFAM" id="SSF46785">
    <property type="entry name" value="Winged helix' DNA-binding domain"/>
    <property type="match status" value="1"/>
</dbReference>
<dbReference type="PROSITE" id="PS00658">
    <property type="entry name" value="FORK_HEAD_2"/>
    <property type="match status" value="1"/>
</dbReference>
<dbReference type="PROSITE" id="PS50039">
    <property type="entry name" value="FORK_HEAD_3"/>
    <property type="match status" value="1"/>
</dbReference>
<organism>
    <name type="scientific">Xenopus laevis</name>
    <name type="common">African clawed frog</name>
    <dbReference type="NCBI Taxonomy" id="8355"/>
    <lineage>
        <taxon>Eukaryota</taxon>
        <taxon>Metazoa</taxon>
        <taxon>Chordata</taxon>
        <taxon>Craniata</taxon>
        <taxon>Vertebrata</taxon>
        <taxon>Euteleostomi</taxon>
        <taxon>Amphibia</taxon>
        <taxon>Batrachia</taxon>
        <taxon>Anura</taxon>
        <taxon>Pipoidea</taxon>
        <taxon>Pipidae</taxon>
        <taxon>Xenopodinae</taxon>
        <taxon>Xenopus</taxon>
        <taxon>Xenopus</taxon>
    </lineage>
</organism>